<organism>
    <name type="scientific">Escherichia coli O6:H1 (strain CFT073 / ATCC 700928 / UPEC)</name>
    <dbReference type="NCBI Taxonomy" id="199310"/>
    <lineage>
        <taxon>Bacteria</taxon>
        <taxon>Pseudomonadati</taxon>
        <taxon>Pseudomonadota</taxon>
        <taxon>Gammaproteobacteria</taxon>
        <taxon>Enterobacterales</taxon>
        <taxon>Enterobacteriaceae</taxon>
        <taxon>Escherichia</taxon>
    </lineage>
</organism>
<protein>
    <recommendedName>
        <fullName>ECF RNA polymerase sigma-E factor</fullName>
    </recommendedName>
    <alternativeName>
        <fullName>RNA polymerase sigma-E factor</fullName>
    </alternativeName>
    <alternativeName>
        <fullName>Sigma-24</fullName>
    </alternativeName>
</protein>
<reference key="1">
    <citation type="journal article" date="2002" name="Proc. Natl. Acad. Sci. U.S.A.">
        <title>Extensive mosaic structure revealed by the complete genome sequence of uropathogenic Escherichia coli.</title>
        <authorList>
            <person name="Welch R.A."/>
            <person name="Burland V."/>
            <person name="Plunkett G. III"/>
            <person name="Redford P."/>
            <person name="Roesch P."/>
            <person name="Rasko D."/>
            <person name="Buckles E.L."/>
            <person name="Liou S.-R."/>
            <person name="Boutin A."/>
            <person name="Hackett J."/>
            <person name="Stroud D."/>
            <person name="Mayhew G.F."/>
            <person name="Rose D.J."/>
            <person name="Zhou S."/>
            <person name="Schwartz D.C."/>
            <person name="Perna N.T."/>
            <person name="Mobley H.L.T."/>
            <person name="Donnenberg M.S."/>
            <person name="Blattner F.R."/>
        </authorList>
    </citation>
    <scope>NUCLEOTIDE SEQUENCE [LARGE SCALE GENOMIC DNA]</scope>
    <source>
        <strain>CFT073 / ATCC 700928 / UPEC</strain>
    </source>
</reference>
<accession>P0AGB7</accession>
<accession>P34086</accession>
<dbReference type="EMBL" id="AE014075">
    <property type="protein sequence ID" value="AAN81546.1"/>
    <property type="status" value="ALT_INIT"/>
    <property type="molecule type" value="Genomic_DNA"/>
</dbReference>
<dbReference type="RefSeq" id="WP_001295364.1">
    <property type="nucleotide sequence ID" value="NZ_CP051263.1"/>
</dbReference>
<dbReference type="BMRB" id="P0AGB7"/>
<dbReference type="SMR" id="P0AGB7"/>
<dbReference type="STRING" id="199310.c3097"/>
<dbReference type="GeneID" id="93774518"/>
<dbReference type="KEGG" id="ecc:c3097"/>
<dbReference type="eggNOG" id="COG1595">
    <property type="taxonomic scope" value="Bacteria"/>
</dbReference>
<dbReference type="HOGENOM" id="CLU_047691_3_0_6"/>
<dbReference type="Proteomes" id="UP000001410">
    <property type="component" value="Chromosome"/>
</dbReference>
<dbReference type="GO" id="GO:0005737">
    <property type="term" value="C:cytoplasm"/>
    <property type="evidence" value="ECO:0007669"/>
    <property type="project" value="UniProtKB-SubCell"/>
</dbReference>
<dbReference type="GO" id="GO:0003677">
    <property type="term" value="F:DNA binding"/>
    <property type="evidence" value="ECO:0007669"/>
    <property type="project" value="UniProtKB-KW"/>
</dbReference>
<dbReference type="GO" id="GO:0016987">
    <property type="term" value="F:sigma factor activity"/>
    <property type="evidence" value="ECO:0007669"/>
    <property type="project" value="UniProtKB-KW"/>
</dbReference>
<dbReference type="GO" id="GO:0006352">
    <property type="term" value="P:DNA-templated transcription initiation"/>
    <property type="evidence" value="ECO:0007669"/>
    <property type="project" value="InterPro"/>
</dbReference>
<dbReference type="CDD" id="cd06171">
    <property type="entry name" value="Sigma70_r4"/>
    <property type="match status" value="1"/>
</dbReference>
<dbReference type="FunFam" id="1.10.10.10:FF:000043">
    <property type="entry name" value="RNA polymerase sigma factor"/>
    <property type="match status" value="1"/>
</dbReference>
<dbReference type="FunFam" id="1.10.1740.10:FF:000001">
    <property type="entry name" value="RNA polymerase sigma factor"/>
    <property type="match status" value="1"/>
</dbReference>
<dbReference type="Gene3D" id="1.10.1740.10">
    <property type="match status" value="1"/>
</dbReference>
<dbReference type="Gene3D" id="1.10.10.10">
    <property type="entry name" value="Winged helix-like DNA-binding domain superfamily/Winged helix DNA-binding domain"/>
    <property type="match status" value="1"/>
</dbReference>
<dbReference type="InterPro" id="IPR039425">
    <property type="entry name" value="RNA_pol_sigma-70-like"/>
</dbReference>
<dbReference type="InterPro" id="IPR014284">
    <property type="entry name" value="RNA_pol_sigma-70_dom"/>
</dbReference>
<dbReference type="InterPro" id="IPR000838">
    <property type="entry name" value="RNA_pol_sigma70_ECF_CS"/>
</dbReference>
<dbReference type="InterPro" id="IPR007627">
    <property type="entry name" value="RNA_pol_sigma70_r2"/>
</dbReference>
<dbReference type="InterPro" id="IPR013249">
    <property type="entry name" value="RNA_pol_sigma70_r4_t2"/>
</dbReference>
<dbReference type="InterPro" id="IPR014286">
    <property type="entry name" value="RNA_pol_sigma70_RpoE"/>
</dbReference>
<dbReference type="InterPro" id="IPR013325">
    <property type="entry name" value="RNA_pol_sigma_r2"/>
</dbReference>
<dbReference type="InterPro" id="IPR013324">
    <property type="entry name" value="RNA_pol_sigma_r3/r4-like"/>
</dbReference>
<dbReference type="InterPro" id="IPR036388">
    <property type="entry name" value="WH-like_DNA-bd_sf"/>
</dbReference>
<dbReference type="NCBIfam" id="TIGR02939">
    <property type="entry name" value="RpoE_Sigma70"/>
    <property type="match status" value="1"/>
</dbReference>
<dbReference type="NCBIfam" id="TIGR02937">
    <property type="entry name" value="sigma70-ECF"/>
    <property type="match status" value="1"/>
</dbReference>
<dbReference type="PANTHER" id="PTHR43133:SF53">
    <property type="entry name" value="ECF RNA POLYMERASE SIGMA-E FACTOR"/>
    <property type="match status" value="1"/>
</dbReference>
<dbReference type="PANTHER" id="PTHR43133">
    <property type="entry name" value="RNA POLYMERASE ECF-TYPE SIGMA FACTO"/>
    <property type="match status" value="1"/>
</dbReference>
<dbReference type="Pfam" id="PF04542">
    <property type="entry name" value="Sigma70_r2"/>
    <property type="match status" value="1"/>
</dbReference>
<dbReference type="Pfam" id="PF08281">
    <property type="entry name" value="Sigma70_r4_2"/>
    <property type="match status" value="1"/>
</dbReference>
<dbReference type="SUPFAM" id="SSF88946">
    <property type="entry name" value="Sigma2 domain of RNA polymerase sigma factors"/>
    <property type="match status" value="1"/>
</dbReference>
<dbReference type="SUPFAM" id="SSF88659">
    <property type="entry name" value="Sigma3 and sigma4 domains of RNA polymerase sigma factors"/>
    <property type="match status" value="1"/>
</dbReference>
<dbReference type="PROSITE" id="PS01063">
    <property type="entry name" value="SIGMA70_ECF"/>
    <property type="match status" value="1"/>
</dbReference>
<feature type="chain" id="PRO_0000093999" description="ECF RNA polymerase sigma-E factor">
    <location>
        <begin position="1"/>
        <end position="191"/>
    </location>
</feature>
<feature type="DNA-binding region" description="H-T-H motif" evidence="1">
    <location>
        <begin position="156"/>
        <end position="175"/>
    </location>
</feature>
<feature type="region of interest" description="Binds RNAP core" evidence="1">
    <location>
        <begin position="1"/>
        <end position="153"/>
    </location>
</feature>
<feature type="region of interest" description="Sigma-70 factor domain-2" evidence="1">
    <location>
        <begin position="25"/>
        <end position="92"/>
    </location>
</feature>
<feature type="region of interest" description="Sigma-70 factor domain-4" evidence="1">
    <location>
        <begin position="129"/>
        <end position="180"/>
    </location>
</feature>
<feature type="short sequence motif" description="Polymerase core binding" evidence="1">
    <location>
        <begin position="48"/>
        <end position="61"/>
    </location>
</feature>
<sequence length="191" mass="21696">MSEQLTDQVLVERVQKGDQKAFNLLVVRYQHKVASLVSRYVPSGDVPDVVQEAFIKAYRALDSFRGDSAFYTWLYRIAVNTAKNYLVAQGRRPPSSDVDAIEAENFESGGALKEISNPENLMLSEELRQIVFRTIESLPEDLRMAITLRELDGLSYEEIAAIMDCPVGTVRSRIFRAREAIDNKVQPLIRR</sequence>
<comment type="function">
    <text evidence="1">Sigma factors are initiation factors that promote the attachment of RNA polymerase (RNAP) to specific initiation sites and are then released. Extracytoplasmic function (ECF) sigma-E controls the envelope stress response, responding to periplasmic protein stress, increased levels of periplasmic lipopolysaccharide (LPS) as well as heat shock and oxidative stress; it controls protein processing in the extracytoplasmic compartment (By similarity).</text>
</comment>
<comment type="activity regulation">
    <text evidence="1">ECF sigma-E is held in an inactive form by its cognate anti-sigma factor (RseA) until released by regulated intramembrane proteolysis (RIP). RIP occurs when an extracytoplasmic signal (periplasmic stress and excess LPS) triggers a concerted proteolytic cascade to transmit information and elicit cellular responses. The anti-sigma factor RseA is an inner membrane protein, binding sigma-E in the cytoplasm and RseB in the periplasm. RseA is first cut extracytoplasmically (site-1 protease, S1P, by DegS), then within the membrane itself (site-2 protease, S2P, by RseP), while cytoplasmic proteases (predominantly ClpX-ClpP) finish degrading the regulatory protein, liberating sigma-E. Degradation of RseA requires 2 signals to activate DegS; an outer membrane protein (OMP) signal activates DegS, while an LPS signal causes release of RseB from RseA, freeing RseA to be cleaved (By similarity).</text>
</comment>
<comment type="subunit">
    <text evidence="1">Interacts transiently with the RNAP catalytic core formed by RpoA, RpoB, RpoC and RpoZ (2 alpha, 1 beta, 1 beta' and 1 omega subunit) to form the RNAP holoenzyme that can initiate transcription. Interacts 1:1 with anti-sigma-E factor RseA which prevents binding to RNAP catalytic core (By similarity).</text>
</comment>
<comment type="subcellular location">
    <subcellularLocation>
        <location evidence="1">Cytoplasm</location>
    </subcellularLocation>
    <text evidence="1">Associates with the inner membrane via RseA.</text>
</comment>
<comment type="domain">
    <text evidence="1">The sigma-70 factor domain-2 mediates sequence-specific interaction with the -10 element in promoter DNA, and plays an important role in melting the double-stranded DNA and the formation of the transcription bubble. The sigma-70 factor domain-2 mediates interaction with the RNA polymerase subunits RpoB and RpoC (By similarity).</text>
</comment>
<comment type="domain">
    <text evidence="1">The sigma-70 factor domain-4 contains a helix-turn-helix (H-T-H) motif that mediates interaction with the -35 element in promoter DNA. The domain also mediates interaction with the RNA polymerase subunit RpoA. Interactions between sigma-70 factor domain-4 and anti-sigma factors prevents interaction of sigma factors with the RNA polymerase catalytic core (By similarity).</text>
</comment>
<comment type="similarity">
    <text evidence="2">Belongs to the sigma-70 factor family. ECF subfamily.</text>
</comment>
<comment type="sequence caution" evidence="2">
    <conflict type="erroneous initiation">
        <sequence resource="EMBL-CDS" id="AAN81546"/>
    </conflict>
    <text>Extended N-terminus.</text>
</comment>
<proteinExistence type="inferred from homology"/>
<evidence type="ECO:0000250" key="1"/>
<evidence type="ECO:0000305" key="2"/>
<name>RPOE_ECOL6</name>
<keyword id="KW-0963">Cytoplasm</keyword>
<keyword id="KW-0238">DNA-binding</keyword>
<keyword id="KW-1185">Reference proteome</keyword>
<keyword id="KW-0731">Sigma factor</keyword>
<keyword id="KW-0346">Stress response</keyword>
<keyword id="KW-0804">Transcription</keyword>
<keyword id="KW-0805">Transcription regulation</keyword>
<gene>
    <name type="primary">rpoE</name>
    <name type="ordered locus">c3097</name>
</gene>